<keyword id="KW-1185">Reference proteome</keyword>
<keyword id="KW-0687">Ribonucleoprotein</keyword>
<keyword id="KW-0689">Ribosomal protein</keyword>
<gene>
    <name evidence="1" type="primary">rpmH</name>
    <name type="ordered locus">Bfl015</name>
</gene>
<dbReference type="EMBL" id="BX248583">
    <property type="protein sequence ID" value="CAD83543.1"/>
    <property type="molecule type" value="Genomic_DNA"/>
</dbReference>
<dbReference type="SMR" id="Q7VQV0"/>
<dbReference type="STRING" id="203907.Bfl015"/>
<dbReference type="KEGG" id="bfl:Bfl015"/>
<dbReference type="eggNOG" id="COG0230">
    <property type="taxonomic scope" value="Bacteria"/>
</dbReference>
<dbReference type="HOGENOM" id="CLU_129938_2_0_6"/>
<dbReference type="OrthoDB" id="9804164at2"/>
<dbReference type="Proteomes" id="UP000002192">
    <property type="component" value="Chromosome"/>
</dbReference>
<dbReference type="GO" id="GO:1990904">
    <property type="term" value="C:ribonucleoprotein complex"/>
    <property type="evidence" value="ECO:0007669"/>
    <property type="project" value="UniProtKB-KW"/>
</dbReference>
<dbReference type="GO" id="GO:0005840">
    <property type="term" value="C:ribosome"/>
    <property type="evidence" value="ECO:0007669"/>
    <property type="project" value="UniProtKB-KW"/>
</dbReference>
<dbReference type="GO" id="GO:0003735">
    <property type="term" value="F:structural constituent of ribosome"/>
    <property type="evidence" value="ECO:0007669"/>
    <property type="project" value="InterPro"/>
</dbReference>
<dbReference type="GO" id="GO:0006412">
    <property type="term" value="P:translation"/>
    <property type="evidence" value="ECO:0007669"/>
    <property type="project" value="UniProtKB-UniRule"/>
</dbReference>
<dbReference type="FunFam" id="1.10.287.3980:FF:000001">
    <property type="entry name" value="Mitochondrial ribosomal protein L34"/>
    <property type="match status" value="1"/>
</dbReference>
<dbReference type="Gene3D" id="1.10.287.3980">
    <property type="match status" value="1"/>
</dbReference>
<dbReference type="HAMAP" id="MF_00391">
    <property type="entry name" value="Ribosomal_bL34"/>
    <property type="match status" value="1"/>
</dbReference>
<dbReference type="InterPro" id="IPR000271">
    <property type="entry name" value="Ribosomal_bL34"/>
</dbReference>
<dbReference type="InterPro" id="IPR020939">
    <property type="entry name" value="Ribosomal_bL34_CS"/>
</dbReference>
<dbReference type="NCBIfam" id="TIGR01030">
    <property type="entry name" value="rpmH_bact"/>
    <property type="match status" value="1"/>
</dbReference>
<dbReference type="PANTHER" id="PTHR14503:SF4">
    <property type="entry name" value="LARGE RIBOSOMAL SUBUNIT PROTEIN BL34M"/>
    <property type="match status" value="1"/>
</dbReference>
<dbReference type="PANTHER" id="PTHR14503">
    <property type="entry name" value="MITOCHONDRIAL RIBOSOMAL PROTEIN 34 FAMILY MEMBER"/>
    <property type="match status" value="1"/>
</dbReference>
<dbReference type="Pfam" id="PF00468">
    <property type="entry name" value="Ribosomal_L34"/>
    <property type="match status" value="1"/>
</dbReference>
<dbReference type="PROSITE" id="PS00784">
    <property type="entry name" value="RIBOSOMAL_L34"/>
    <property type="match status" value="1"/>
</dbReference>
<evidence type="ECO:0000255" key="1">
    <source>
        <dbReference type="HAMAP-Rule" id="MF_00391"/>
    </source>
</evidence>
<evidence type="ECO:0000305" key="2"/>
<accession>Q7VQV0</accession>
<organism>
    <name type="scientific">Blochmanniella floridana</name>
    <dbReference type="NCBI Taxonomy" id="203907"/>
    <lineage>
        <taxon>Bacteria</taxon>
        <taxon>Pseudomonadati</taxon>
        <taxon>Pseudomonadota</taxon>
        <taxon>Gammaproteobacteria</taxon>
        <taxon>Enterobacterales</taxon>
        <taxon>Enterobacteriaceae</taxon>
        <taxon>ant endosymbionts</taxon>
        <taxon>Candidatus Blochmanniella</taxon>
    </lineage>
</organism>
<protein>
    <recommendedName>
        <fullName evidence="1">Large ribosomal subunit protein bL34</fullName>
    </recommendedName>
    <alternativeName>
        <fullName evidence="2">50S ribosomal protein L34</fullName>
    </alternativeName>
</protein>
<comment type="similarity">
    <text evidence="1">Belongs to the bacterial ribosomal protein bL34 family.</text>
</comment>
<sequence length="46" mass="5512">MKRTYQPSVLKRNRTHGFRLRMSTQNGRQILSRRRAKGRIRLIVSS</sequence>
<reference key="1">
    <citation type="journal article" date="2003" name="Proc. Natl. Acad. Sci. U.S.A.">
        <title>The genome sequence of Blochmannia floridanus: comparative analysis of reduced genomes.</title>
        <authorList>
            <person name="Gil R."/>
            <person name="Silva F.J."/>
            <person name="Zientz E."/>
            <person name="Delmotte F."/>
            <person name="Gonzalez-Candelas F."/>
            <person name="Latorre A."/>
            <person name="Rausell C."/>
            <person name="Kamerbeek J."/>
            <person name="Gadau J."/>
            <person name="Hoelldobler B."/>
            <person name="van Ham R.C.H.J."/>
            <person name="Gross R."/>
            <person name="Moya A."/>
        </authorList>
    </citation>
    <scope>NUCLEOTIDE SEQUENCE [LARGE SCALE GENOMIC DNA]</scope>
</reference>
<feature type="chain" id="PRO_0000187362" description="Large ribosomal subunit protein bL34">
    <location>
        <begin position="1"/>
        <end position="46"/>
    </location>
</feature>
<name>RL34_BLOFL</name>
<proteinExistence type="inferred from homology"/>